<evidence type="ECO:0000255" key="1">
    <source>
        <dbReference type="HAMAP-Rule" id="MF_00373"/>
    </source>
</evidence>
<evidence type="ECO:0000305" key="2"/>
<accession>Q6NCH9</accession>
<dbReference type="EMBL" id="BX572594">
    <property type="protein sequence ID" value="CAE25937.1"/>
    <property type="molecule type" value="Genomic_DNA"/>
</dbReference>
<dbReference type="RefSeq" id="WP_011156061.1">
    <property type="nucleotide sequence ID" value="NZ_CP116810.1"/>
</dbReference>
<dbReference type="SMR" id="Q6NCH9"/>
<dbReference type="IntAct" id="Q6NCH9">
    <property type="interactions" value="1"/>
</dbReference>
<dbReference type="STRING" id="258594.RPA0493"/>
<dbReference type="GeneID" id="66891511"/>
<dbReference type="eggNOG" id="COG0227">
    <property type="taxonomic scope" value="Bacteria"/>
</dbReference>
<dbReference type="HOGENOM" id="CLU_064548_4_2_5"/>
<dbReference type="PhylomeDB" id="Q6NCH9"/>
<dbReference type="GO" id="GO:0022625">
    <property type="term" value="C:cytosolic large ribosomal subunit"/>
    <property type="evidence" value="ECO:0007669"/>
    <property type="project" value="TreeGrafter"/>
</dbReference>
<dbReference type="GO" id="GO:0003735">
    <property type="term" value="F:structural constituent of ribosome"/>
    <property type="evidence" value="ECO:0007669"/>
    <property type="project" value="InterPro"/>
</dbReference>
<dbReference type="GO" id="GO:0006412">
    <property type="term" value="P:translation"/>
    <property type="evidence" value="ECO:0007669"/>
    <property type="project" value="UniProtKB-UniRule"/>
</dbReference>
<dbReference type="Gene3D" id="2.30.170.40">
    <property type="entry name" value="Ribosomal protein L28/L24"/>
    <property type="match status" value="1"/>
</dbReference>
<dbReference type="HAMAP" id="MF_00373">
    <property type="entry name" value="Ribosomal_bL28"/>
    <property type="match status" value="1"/>
</dbReference>
<dbReference type="InterPro" id="IPR026569">
    <property type="entry name" value="Ribosomal_bL28"/>
</dbReference>
<dbReference type="InterPro" id="IPR034704">
    <property type="entry name" value="Ribosomal_bL28/bL31-like_sf"/>
</dbReference>
<dbReference type="InterPro" id="IPR001383">
    <property type="entry name" value="Ribosomal_bL28_bact-type"/>
</dbReference>
<dbReference type="InterPro" id="IPR037147">
    <property type="entry name" value="Ribosomal_bL28_sf"/>
</dbReference>
<dbReference type="NCBIfam" id="TIGR00009">
    <property type="entry name" value="L28"/>
    <property type="match status" value="1"/>
</dbReference>
<dbReference type="PANTHER" id="PTHR13528">
    <property type="entry name" value="39S RIBOSOMAL PROTEIN L28, MITOCHONDRIAL"/>
    <property type="match status" value="1"/>
</dbReference>
<dbReference type="PANTHER" id="PTHR13528:SF2">
    <property type="entry name" value="LARGE RIBOSOMAL SUBUNIT PROTEIN BL28M"/>
    <property type="match status" value="1"/>
</dbReference>
<dbReference type="Pfam" id="PF00830">
    <property type="entry name" value="Ribosomal_L28"/>
    <property type="match status" value="1"/>
</dbReference>
<dbReference type="SUPFAM" id="SSF143800">
    <property type="entry name" value="L28p-like"/>
    <property type="match status" value="1"/>
</dbReference>
<proteinExistence type="evidence at protein level"/>
<feature type="chain" id="PRO_0000178537" description="Large ribosomal subunit protein bL28">
    <location>
        <begin position="1"/>
        <end position="101"/>
    </location>
</feature>
<protein>
    <recommendedName>
        <fullName evidence="1">Large ribosomal subunit protein bL28</fullName>
    </recommendedName>
    <alternativeName>
        <fullName evidence="2">50S ribosomal protein L28</fullName>
    </alternativeName>
    <alternativeName>
        <fullName>RRP-L28</fullName>
    </alternativeName>
</protein>
<gene>
    <name evidence="1" type="primary">rpmB</name>
    <name type="ordered locus">RPA0493</name>
</gene>
<sequence length="101" mass="10979">MSRRCELTAKGAQVGHKVSHSNIKTKRRFLPNLVNVTFLSDTLGRAVRLRVSTNALKSVDHRGGLDAYLLKAREAELSPKAVELKRAIAKKMAGEPVAAAS</sequence>
<comment type="miscellaneous">
    <text>The initiator methionine may be removed.</text>
</comment>
<comment type="similarity">
    <text evidence="1">Belongs to the bacterial ribosomal protein bL28 family.</text>
</comment>
<organism>
    <name type="scientific">Rhodopseudomonas palustris (strain ATCC BAA-98 / CGA009)</name>
    <dbReference type="NCBI Taxonomy" id="258594"/>
    <lineage>
        <taxon>Bacteria</taxon>
        <taxon>Pseudomonadati</taxon>
        <taxon>Pseudomonadota</taxon>
        <taxon>Alphaproteobacteria</taxon>
        <taxon>Hyphomicrobiales</taxon>
        <taxon>Nitrobacteraceae</taxon>
        <taxon>Rhodopseudomonas</taxon>
    </lineage>
</organism>
<reference key="1">
    <citation type="journal article" date="2004" name="Nat. Biotechnol.">
        <title>Complete genome sequence of the metabolically versatile photosynthetic bacterium Rhodopseudomonas palustris.</title>
        <authorList>
            <person name="Larimer F.W."/>
            <person name="Chain P."/>
            <person name="Hauser L."/>
            <person name="Lamerdin J.E."/>
            <person name="Malfatti S."/>
            <person name="Do L."/>
            <person name="Land M.L."/>
            <person name="Pelletier D.A."/>
            <person name="Beatty J.T."/>
            <person name="Lang A.S."/>
            <person name="Tabita F.R."/>
            <person name="Gibson J.L."/>
            <person name="Hanson T.E."/>
            <person name="Bobst C."/>
            <person name="Torres y Torres J.L."/>
            <person name="Peres C."/>
            <person name="Harrison F.H."/>
            <person name="Gibson J."/>
            <person name="Harwood C.S."/>
        </authorList>
    </citation>
    <scope>NUCLEOTIDE SEQUENCE [LARGE SCALE GENOMIC DNA]</scope>
    <source>
        <strain>ATCC BAA-98 / CGA009</strain>
    </source>
</reference>
<reference key="2">
    <citation type="journal article" date="2004" name="J. Proteome Res.">
        <title>Characterization of the 70S ribosome from Rhodopseudomonas palustris using an integrated 'top-down' and 'bottom-up' mass spectrometric approach.</title>
        <authorList>
            <person name="Strader M.B."/>
            <person name="VerBerkmoes N.C."/>
            <person name="Tabb D.L."/>
            <person name="Connelly H.M."/>
            <person name="Barton J.W."/>
            <person name="Bruce B.D."/>
            <person name="Pelletier D.A."/>
            <person name="Davison B.H."/>
            <person name="Hettich R.L."/>
            <person name="Larimer F.W."/>
            <person name="Hurst G.B."/>
        </authorList>
    </citation>
    <scope>IDENTIFICATION BY MASS SPECTROMETRY</scope>
    <source>
        <strain>ATCC BAA-98 / CGA009</strain>
    </source>
</reference>
<name>RL28_RHOPA</name>
<keyword id="KW-0687">Ribonucleoprotein</keyword>
<keyword id="KW-0689">Ribosomal protein</keyword>